<comment type="function">
    <text evidence="1">Binds the lower part of the 30S subunit head. Binds mRNA in the 70S ribosome, positioning it for translation.</text>
</comment>
<comment type="subunit">
    <text evidence="1">Part of the 30S ribosomal subunit. Forms a tight complex with proteins S10 and S14.</text>
</comment>
<comment type="similarity">
    <text evidence="1">Belongs to the universal ribosomal protein uS3 family.</text>
</comment>
<evidence type="ECO:0000255" key="1">
    <source>
        <dbReference type="HAMAP-Rule" id="MF_01309"/>
    </source>
</evidence>
<evidence type="ECO:0000256" key="2">
    <source>
        <dbReference type="SAM" id="MobiDB-lite"/>
    </source>
</evidence>
<evidence type="ECO:0000305" key="3"/>
<accession>A9WSV3</accession>
<sequence>MGQKVNPHGFRLGITTNHVSHWFADSNKAGQRYKDFVREDIKIRQLMSTGMERAGIAKVEIERTRDRVRVDIHTARPGIVIGRRGAEADRIRGELEKLTGKQVQLNILEVKNPEMEAQLVAQGIAEQLSSRVAFRRAMKKAMQSAQRAGAKGIRVQCSGRLGGAEMSRSEFYREGRVPLHTLRAQIDYGFFEAKTTFGRIGVKVWIYKGDVTAKELAQQAASAPSRGRAPRRDGDDRGPRRENSGPRRDGGNLRSQRNDRNENAAVEAAPAAAAVATEGSDA</sequence>
<proteinExistence type="inferred from homology"/>
<keyword id="KW-1185">Reference proteome</keyword>
<keyword id="KW-0687">Ribonucleoprotein</keyword>
<keyword id="KW-0689">Ribosomal protein</keyword>
<keyword id="KW-0694">RNA-binding</keyword>
<keyword id="KW-0699">rRNA-binding</keyword>
<protein>
    <recommendedName>
        <fullName evidence="1">Small ribosomal subunit protein uS3</fullName>
    </recommendedName>
    <alternativeName>
        <fullName evidence="3">30S ribosomal protein S3</fullName>
    </alternativeName>
</protein>
<organism>
    <name type="scientific">Renibacterium salmoninarum (strain ATCC 33209 / DSM 20767 / JCM 11484 / NBRC 15589 / NCIMB 2235)</name>
    <dbReference type="NCBI Taxonomy" id="288705"/>
    <lineage>
        <taxon>Bacteria</taxon>
        <taxon>Bacillati</taxon>
        <taxon>Actinomycetota</taxon>
        <taxon>Actinomycetes</taxon>
        <taxon>Micrococcales</taxon>
        <taxon>Micrococcaceae</taxon>
        <taxon>Renibacterium</taxon>
    </lineage>
</organism>
<dbReference type="EMBL" id="CP000910">
    <property type="protein sequence ID" value="ABY23891.1"/>
    <property type="molecule type" value="Genomic_DNA"/>
</dbReference>
<dbReference type="RefSeq" id="WP_012245557.1">
    <property type="nucleotide sequence ID" value="NC_010168.1"/>
</dbReference>
<dbReference type="SMR" id="A9WSV3"/>
<dbReference type="STRING" id="288705.RSal33209_2159"/>
<dbReference type="KEGG" id="rsa:RSal33209_2159"/>
<dbReference type="eggNOG" id="COG0092">
    <property type="taxonomic scope" value="Bacteria"/>
</dbReference>
<dbReference type="HOGENOM" id="CLU_058591_0_2_11"/>
<dbReference type="Proteomes" id="UP000002007">
    <property type="component" value="Chromosome"/>
</dbReference>
<dbReference type="GO" id="GO:0022627">
    <property type="term" value="C:cytosolic small ribosomal subunit"/>
    <property type="evidence" value="ECO:0007669"/>
    <property type="project" value="TreeGrafter"/>
</dbReference>
<dbReference type="GO" id="GO:0003729">
    <property type="term" value="F:mRNA binding"/>
    <property type="evidence" value="ECO:0007669"/>
    <property type="project" value="UniProtKB-UniRule"/>
</dbReference>
<dbReference type="GO" id="GO:0019843">
    <property type="term" value="F:rRNA binding"/>
    <property type="evidence" value="ECO:0007669"/>
    <property type="project" value="UniProtKB-UniRule"/>
</dbReference>
<dbReference type="GO" id="GO:0003735">
    <property type="term" value="F:structural constituent of ribosome"/>
    <property type="evidence" value="ECO:0007669"/>
    <property type="project" value="InterPro"/>
</dbReference>
<dbReference type="GO" id="GO:0006412">
    <property type="term" value="P:translation"/>
    <property type="evidence" value="ECO:0007669"/>
    <property type="project" value="UniProtKB-UniRule"/>
</dbReference>
<dbReference type="CDD" id="cd02412">
    <property type="entry name" value="KH-II_30S_S3"/>
    <property type="match status" value="1"/>
</dbReference>
<dbReference type="FunFam" id="3.30.1140.32:FF:000002">
    <property type="entry name" value="30S ribosomal protein S3"/>
    <property type="match status" value="1"/>
</dbReference>
<dbReference type="FunFam" id="3.30.300.20:FF:000001">
    <property type="entry name" value="30S ribosomal protein S3"/>
    <property type="match status" value="1"/>
</dbReference>
<dbReference type="Gene3D" id="3.30.300.20">
    <property type="match status" value="1"/>
</dbReference>
<dbReference type="Gene3D" id="3.30.1140.32">
    <property type="entry name" value="Ribosomal protein S3, C-terminal domain"/>
    <property type="match status" value="1"/>
</dbReference>
<dbReference type="HAMAP" id="MF_01309_B">
    <property type="entry name" value="Ribosomal_uS3_B"/>
    <property type="match status" value="1"/>
</dbReference>
<dbReference type="InterPro" id="IPR004087">
    <property type="entry name" value="KH_dom"/>
</dbReference>
<dbReference type="InterPro" id="IPR015946">
    <property type="entry name" value="KH_dom-like_a/b"/>
</dbReference>
<dbReference type="InterPro" id="IPR004044">
    <property type="entry name" value="KH_dom_type_2"/>
</dbReference>
<dbReference type="InterPro" id="IPR009019">
    <property type="entry name" value="KH_sf_prok-type"/>
</dbReference>
<dbReference type="InterPro" id="IPR036419">
    <property type="entry name" value="Ribosomal_S3_C_sf"/>
</dbReference>
<dbReference type="InterPro" id="IPR005704">
    <property type="entry name" value="Ribosomal_uS3_bac-typ"/>
</dbReference>
<dbReference type="InterPro" id="IPR001351">
    <property type="entry name" value="Ribosomal_uS3_C"/>
</dbReference>
<dbReference type="InterPro" id="IPR018280">
    <property type="entry name" value="Ribosomal_uS3_CS"/>
</dbReference>
<dbReference type="NCBIfam" id="TIGR01009">
    <property type="entry name" value="rpsC_bact"/>
    <property type="match status" value="1"/>
</dbReference>
<dbReference type="PANTHER" id="PTHR11760">
    <property type="entry name" value="30S/40S RIBOSOMAL PROTEIN S3"/>
    <property type="match status" value="1"/>
</dbReference>
<dbReference type="PANTHER" id="PTHR11760:SF19">
    <property type="entry name" value="SMALL RIBOSOMAL SUBUNIT PROTEIN US3C"/>
    <property type="match status" value="1"/>
</dbReference>
<dbReference type="Pfam" id="PF07650">
    <property type="entry name" value="KH_2"/>
    <property type="match status" value="1"/>
</dbReference>
<dbReference type="Pfam" id="PF00189">
    <property type="entry name" value="Ribosomal_S3_C"/>
    <property type="match status" value="1"/>
</dbReference>
<dbReference type="SMART" id="SM00322">
    <property type="entry name" value="KH"/>
    <property type="match status" value="1"/>
</dbReference>
<dbReference type="SUPFAM" id="SSF54814">
    <property type="entry name" value="Prokaryotic type KH domain (KH-domain type II)"/>
    <property type="match status" value="1"/>
</dbReference>
<dbReference type="SUPFAM" id="SSF54821">
    <property type="entry name" value="Ribosomal protein S3 C-terminal domain"/>
    <property type="match status" value="1"/>
</dbReference>
<dbReference type="PROSITE" id="PS50823">
    <property type="entry name" value="KH_TYPE_2"/>
    <property type="match status" value="1"/>
</dbReference>
<dbReference type="PROSITE" id="PS00548">
    <property type="entry name" value="RIBOSOMAL_S3"/>
    <property type="match status" value="1"/>
</dbReference>
<gene>
    <name evidence="1" type="primary">rpsC</name>
    <name type="ordered locus">RSal33209_2159</name>
</gene>
<name>RS3_RENSM</name>
<reference key="1">
    <citation type="journal article" date="2008" name="J. Bacteriol.">
        <title>Genome sequence of the fish pathogen Renibacterium salmoninarum suggests reductive evolution away from an environmental Arthrobacter ancestor.</title>
        <authorList>
            <person name="Wiens G.D."/>
            <person name="Rockey D.D."/>
            <person name="Wu Z."/>
            <person name="Chang J."/>
            <person name="Levy R."/>
            <person name="Crane S."/>
            <person name="Chen D.S."/>
            <person name="Capri G.R."/>
            <person name="Burnett J.R."/>
            <person name="Sudheesh P.S."/>
            <person name="Schipma M.J."/>
            <person name="Burd H."/>
            <person name="Bhattacharyya A."/>
            <person name="Rhodes L.D."/>
            <person name="Kaul R."/>
            <person name="Strom M.S."/>
        </authorList>
    </citation>
    <scope>NUCLEOTIDE SEQUENCE [LARGE SCALE GENOMIC DNA]</scope>
    <source>
        <strain>ATCC 33209 / DSM 20767 / JCM 11484 / NBRC 15589 / NCIMB 2235</strain>
    </source>
</reference>
<feature type="chain" id="PRO_1000086145" description="Small ribosomal subunit protein uS3">
    <location>
        <begin position="1"/>
        <end position="282"/>
    </location>
</feature>
<feature type="domain" description="KH type-2" evidence="1">
    <location>
        <begin position="43"/>
        <end position="111"/>
    </location>
</feature>
<feature type="region of interest" description="Disordered" evidence="2">
    <location>
        <begin position="218"/>
        <end position="282"/>
    </location>
</feature>
<feature type="compositionally biased region" description="Basic and acidic residues" evidence="2">
    <location>
        <begin position="230"/>
        <end position="262"/>
    </location>
</feature>
<feature type="compositionally biased region" description="Low complexity" evidence="2">
    <location>
        <begin position="263"/>
        <end position="276"/>
    </location>
</feature>